<dbReference type="EC" id="2.7.11.32" evidence="1"/>
<dbReference type="EC" id="2.7.4.27" evidence="1"/>
<dbReference type="EMBL" id="CP000416">
    <property type="protein sequence ID" value="ABJ63886.1"/>
    <property type="molecule type" value="Genomic_DNA"/>
</dbReference>
<dbReference type="RefSeq" id="WP_011667517.1">
    <property type="nucleotide sequence ID" value="NC_008497.1"/>
</dbReference>
<dbReference type="SMR" id="Q03SD6"/>
<dbReference type="STRING" id="387344.LVIS_0743"/>
<dbReference type="KEGG" id="lbr:LVIS_0743"/>
<dbReference type="PATRIC" id="fig|387344.15.peg.716"/>
<dbReference type="eggNOG" id="COG1806">
    <property type="taxonomic scope" value="Bacteria"/>
</dbReference>
<dbReference type="HOGENOM" id="CLU_046206_2_1_9"/>
<dbReference type="Proteomes" id="UP000001652">
    <property type="component" value="Chromosome"/>
</dbReference>
<dbReference type="GO" id="GO:0043531">
    <property type="term" value="F:ADP binding"/>
    <property type="evidence" value="ECO:0007669"/>
    <property type="project" value="UniProtKB-UniRule"/>
</dbReference>
<dbReference type="GO" id="GO:0005524">
    <property type="term" value="F:ATP binding"/>
    <property type="evidence" value="ECO:0007669"/>
    <property type="project" value="InterPro"/>
</dbReference>
<dbReference type="GO" id="GO:0016776">
    <property type="term" value="F:phosphotransferase activity, phosphate group as acceptor"/>
    <property type="evidence" value="ECO:0007669"/>
    <property type="project" value="UniProtKB-UniRule"/>
</dbReference>
<dbReference type="GO" id="GO:0004674">
    <property type="term" value="F:protein serine/threonine kinase activity"/>
    <property type="evidence" value="ECO:0007669"/>
    <property type="project" value="UniProtKB-UniRule"/>
</dbReference>
<dbReference type="HAMAP" id="MF_00921">
    <property type="entry name" value="PDRP"/>
    <property type="match status" value="1"/>
</dbReference>
<dbReference type="InterPro" id="IPR005177">
    <property type="entry name" value="Kinase-pyrophosphorylase"/>
</dbReference>
<dbReference type="InterPro" id="IPR026565">
    <property type="entry name" value="PPDK_reg"/>
</dbReference>
<dbReference type="NCBIfam" id="NF003742">
    <property type="entry name" value="PRK05339.1"/>
    <property type="match status" value="1"/>
</dbReference>
<dbReference type="PANTHER" id="PTHR31756">
    <property type="entry name" value="PYRUVATE, PHOSPHATE DIKINASE REGULATORY PROTEIN 1, CHLOROPLASTIC"/>
    <property type="match status" value="1"/>
</dbReference>
<dbReference type="PANTHER" id="PTHR31756:SF3">
    <property type="entry name" value="PYRUVATE, PHOSPHATE DIKINASE REGULATORY PROTEIN 1, CHLOROPLASTIC"/>
    <property type="match status" value="1"/>
</dbReference>
<dbReference type="Pfam" id="PF03618">
    <property type="entry name" value="Kinase-PPPase"/>
    <property type="match status" value="1"/>
</dbReference>
<comment type="function">
    <text evidence="1">Bifunctional serine/threonine kinase and phosphorylase involved in the regulation of the pyruvate, phosphate dikinase (PPDK) by catalyzing its phosphorylation/dephosphorylation.</text>
</comment>
<comment type="catalytic activity">
    <reaction evidence="1">
        <text>N(tele)-phospho-L-histidyl/L-threonyl-[pyruvate, phosphate dikinase] + ADP = N(tele)-phospho-L-histidyl/O-phospho-L-threonyl-[pyruvate, phosphate dikinase] + AMP + H(+)</text>
        <dbReference type="Rhea" id="RHEA:43692"/>
        <dbReference type="Rhea" id="RHEA-COMP:10650"/>
        <dbReference type="Rhea" id="RHEA-COMP:10651"/>
        <dbReference type="ChEBI" id="CHEBI:15378"/>
        <dbReference type="ChEBI" id="CHEBI:30013"/>
        <dbReference type="ChEBI" id="CHEBI:61977"/>
        <dbReference type="ChEBI" id="CHEBI:83586"/>
        <dbReference type="ChEBI" id="CHEBI:456215"/>
        <dbReference type="ChEBI" id="CHEBI:456216"/>
        <dbReference type="EC" id="2.7.11.32"/>
    </reaction>
</comment>
<comment type="catalytic activity">
    <reaction evidence="1">
        <text>N(tele)-phospho-L-histidyl/O-phospho-L-threonyl-[pyruvate, phosphate dikinase] + phosphate + H(+) = N(tele)-phospho-L-histidyl/L-threonyl-[pyruvate, phosphate dikinase] + diphosphate</text>
        <dbReference type="Rhea" id="RHEA:43696"/>
        <dbReference type="Rhea" id="RHEA-COMP:10650"/>
        <dbReference type="Rhea" id="RHEA-COMP:10651"/>
        <dbReference type="ChEBI" id="CHEBI:15378"/>
        <dbReference type="ChEBI" id="CHEBI:30013"/>
        <dbReference type="ChEBI" id="CHEBI:33019"/>
        <dbReference type="ChEBI" id="CHEBI:43474"/>
        <dbReference type="ChEBI" id="CHEBI:61977"/>
        <dbReference type="ChEBI" id="CHEBI:83586"/>
        <dbReference type="EC" id="2.7.4.27"/>
    </reaction>
</comment>
<comment type="similarity">
    <text evidence="1">Belongs to the pyruvate, phosphate/water dikinase regulatory protein family. PDRP subfamily.</text>
</comment>
<keyword id="KW-0418">Kinase</keyword>
<keyword id="KW-0547">Nucleotide-binding</keyword>
<keyword id="KW-1185">Reference proteome</keyword>
<keyword id="KW-0723">Serine/threonine-protein kinase</keyword>
<keyword id="KW-0808">Transferase</keyword>
<proteinExistence type="inferred from homology"/>
<gene>
    <name type="ordered locus">LVIS_0743</name>
</gene>
<name>PDRP_LEVBA</name>
<sequence>MQQMTIFVISDSSGETALTVAQTAVSQYPTIQVSYQRFPFIQTDSILDGILNLAKKQRAMIFHTLVSPKLSQHVREFAAMNHLQQFDCIQPAMDVMHQATGLEPEGVPGLVHNLNDTYFDRIAAMEFAVTYDDGKDPTGLLKADIVILGVSRTSKTPLSLFLANRNLRVANLPLSPKTQLPDELWQVDPKRIFGLTNRPEILRKIRQERMLSYGLPADSAYSDTAKITEELAYAQKLYKKIGCLVIDVSNKSIEETATLIMESVDYDLIPHSLQD</sequence>
<protein>
    <recommendedName>
        <fullName evidence="1">Putative pyruvate, phosphate dikinase regulatory protein</fullName>
        <shortName evidence="1">PPDK regulatory protein</shortName>
        <ecNumber evidence="1">2.7.11.32</ecNumber>
        <ecNumber evidence="1">2.7.4.27</ecNumber>
    </recommendedName>
</protein>
<accession>Q03SD6</accession>
<evidence type="ECO:0000255" key="1">
    <source>
        <dbReference type="HAMAP-Rule" id="MF_00921"/>
    </source>
</evidence>
<feature type="chain" id="PRO_0000316685" description="Putative pyruvate, phosphate dikinase regulatory protein">
    <location>
        <begin position="1"/>
        <end position="275"/>
    </location>
</feature>
<feature type="binding site" evidence="1">
    <location>
        <begin position="149"/>
        <end position="156"/>
    </location>
    <ligand>
        <name>ADP</name>
        <dbReference type="ChEBI" id="CHEBI:456216"/>
    </ligand>
</feature>
<reference key="1">
    <citation type="journal article" date="2006" name="Proc. Natl. Acad. Sci. U.S.A.">
        <title>Comparative genomics of the lactic acid bacteria.</title>
        <authorList>
            <person name="Makarova K.S."/>
            <person name="Slesarev A."/>
            <person name="Wolf Y.I."/>
            <person name="Sorokin A."/>
            <person name="Mirkin B."/>
            <person name="Koonin E.V."/>
            <person name="Pavlov A."/>
            <person name="Pavlova N."/>
            <person name="Karamychev V."/>
            <person name="Polouchine N."/>
            <person name="Shakhova V."/>
            <person name="Grigoriev I."/>
            <person name="Lou Y."/>
            <person name="Rohksar D."/>
            <person name="Lucas S."/>
            <person name="Huang K."/>
            <person name="Goodstein D.M."/>
            <person name="Hawkins T."/>
            <person name="Plengvidhya V."/>
            <person name="Welker D."/>
            <person name="Hughes J."/>
            <person name="Goh Y."/>
            <person name="Benson A."/>
            <person name="Baldwin K."/>
            <person name="Lee J.-H."/>
            <person name="Diaz-Muniz I."/>
            <person name="Dosti B."/>
            <person name="Smeianov V."/>
            <person name="Wechter W."/>
            <person name="Barabote R."/>
            <person name="Lorca G."/>
            <person name="Altermann E."/>
            <person name="Barrangou R."/>
            <person name="Ganesan B."/>
            <person name="Xie Y."/>
            <person name="Rawsthorne H."/>
            <person name="Tamir D."/>
            <person name="Parker C."/>
            <person name="Breidt F."/>
            <person name="Broadbent J.R."/>
            <person name="Hutkins R."/>
            <person name="O'Sullivan D."/>
            <person name="Steele J."/>
            <person name="Unlu G."/>
            <person name="Saier M.H. Jr."/>
            <person name="Klaenhammer T."/>
            <person name="Richardson P."/>
            <person name="Kozyavkin S."/>
            <person name="Weimer B.C."/>
            <person name="Mills D.A."/>
        </authorList>
    </citation>
    <scope>NUCLEOTIDE SEQUENCE [LARGE SCALE GENOMIC DNA]</scope>
    <source>
        <strain>ATCC 367 / BCRC 12310 / CIP 105137 / JCM 1170 / LMG 11437 / NCIMB 947 / NCTC 947</strain>
    </source>
</reference>
<organism>
    <name type="scientific">Levilactobacillus brevis (strain ATCC 367 / BCRC 12310 / CIP 105137 / JCM 1170 / LMG 11437 / NCIMB 947 / NCTC 947)</name>
    <name type="common">Lactobacillus brevis</name>
    <dbReference type="NCBI Taxonomy" id="387344"/>
    <lineage>
        <taxon>Bacteria</taxon>
        <taxon>Bacillati</taxon>
        <taxon>Bacillota</taxon>
        <taxon>Bacilli</taxon>
        <taxon>Lactobacillales</taxon>
        <taxon>Lactobacillaceae</taxon>
        <taxon>Levilactobacillus</taxon>
    </lineage>
</organism>